<reference key="1">
    <citation type="journal article" date="2002" name="J. Bacteriol.">
        <title>Whole-genome comparison of Mycobacterium tuberculosis clinical and laboratory strains.</title>
        <authorList>
            <person name="Fleischmann R.D."/>
            <person name="Alland D."/>
            <person name="Eisen J.A."/>
            <person name="Carpenter L."/>
            <person name="White O."/>
            <person name="Peterson J.D."/>
            <person name="DeBoy R.T."/>
            <person name="Dodson R.J."/>
            <person name="Gwinn M.L."/>
            <person name="Haft D.H."/>
            <person name="Hickey E.K."/>
            <person name="Kolonay J.F."/>
            <person name="Nelson W.C."/>
            <person name="Umayam L.A."/>
            <person name="Ermolaeva M.D."/>
            <person name="Salzberg S.L."/>
            <person name="Delcher A."/>
            <person name="Utterback T.R."/>
            <person name="Weidman J.F."/>
            <person name="Khouri H.M."/>
            <person name="Gill J."/>
            <person name="Mikula A."/>
            <person name="Bishai W."/>
            <person name="Jacobs W.R. Jr."/>
            <person name="Venter J.C."/>
            <person name="Fraser C.M."/>
        </authorList>
    </citation>
    <scope>NUCLEOTIDE SEQUENCE [LARGE SCALE GENOMIC DNA]</scope>
    <source>
        <strain>CDC 1551 / Oshkosh</strain>
    </source>
</reference>
<proteinExistence type="inferred from homology"/>
<evidence type="ECO:0000250" key="1">
    <source>
        <dbReference type="UniProtKB" id="P9WNJ9"/>
    </source>
</evidence>
<evidence type="ECO:0000305" key="2"/>
<keyword id="KW-1185">Reference proteome</keyword>
<keyword id="KW-0964">Secreted</keyword>
<feature type="chain" id="PRO_0000427114" description="ESAT-6-like protein EsxJ">
    <location>
        <begin position="1"/>
        <end position="98"/>
    </location>
</feature>
<accession>P9WNJ8</accession>
<accession>L0T747</accession>
<accession>P96363</accession>
<name>ESXJ_MYCTO</name>
<gene>
    <name evidence="1" type="primary">esxJ</name>
    <name type="ordered locus">MT1067</name>
</gene>
<comment type="subcellular location">
    <subcellularLocation>
        <location evidence="1">Secreted</location>
    </subcellularLocation>
    <text evidence="1">Probably secreted via the ESX-5 / type VII secretion system (T7SS).</text>
</comment>
<comment type="similarity">
    <text evidence="2">Belongs to the WXG100 family. CFP-10 subfamily.</text>
</comment>
<comment type="sequence caution" evidence="2">
    <conflict type="erroneous initiation">
        <sequence resource="EMBL-CDS" id="AAK45318"/>
    </conflict>
</comment>
<sequence>MASRFMTDPHAMRDMAGRFEVHAQTVEDEARRMWASAQNISGAGWSGMAEATSLDTMTQMNQAFRNIVNMLHGVRDGLVRDANNYEQQEQASQQILSS</sequence>
<dbReference type="EMBL" id="AE000516">
    <property type="protein sequence ID" value="AAK45318.1"/>
    <property type="status" value="ALT_INIT"/>
    <property type="molecule type" value="Genomic_DNA"/>
</dbReference>
<dbReference type="PIR" id="A70625">
    <property type="entry name" value="A70625"/>
</dbReference>
<dbReference type="RefSeq" id="WP_003405345.1">
    <property type="nucleotide sequence ID" value="NZ_KK341227.1"/>
</dbReference>
<dbReference type="SMR" id="P9WNJ8"/>
<dbReference type="GeneID" id="45425009"/>
<dbReference type="KEGG" id="mtc:MT1067"/>
<dbReference type="PATRIC" id="fig|83331.31.peg.1146"/>
<dbReference type="HOGENOM" id="CLU_171031_0_0_11"/>
<dbReference type="Proteomes" id="UP000001020">
    <property type="component" value="Chromosome"/>
</dbReference>
<dbReference type="GO" id="GO:0005576">
    <property type="term" value="C:extracellular region"/>
    <property type="evidence" value="ECO:0007669"/>
    <property type="project" value="UniProtKB-SubCell"/>
</dbReference>
<dbReference type="FunFam" id="1.10.287.1060:FF:000006">
    <property type="entry name" value="ESAT-6-like protein"/>
    <property type="match status" value="1"/>
</dbReference>
<dbReference type="Gene3D" id="1.10.287.1060">
    <property type="entry name" value="ESAT-6-like"/>
    <property type="match status" value="1"/>
</dbReference>
<dbReference type="InterPro" id="IPR036689">
    <property type="entry name" value="ESAT-6-like_sf"/>
</dbReference>
<dbReference type="InterPro" id="IPR010310">
    <property type="entry name" value="T7SS_ESAT-6-like"/>
</dbReference>
<dbReference type="NCBIfam" id="TIGR03930">
    <property type="entry name" value="WXG100_ESAT6"/>
    <property type="match status" value="1"/>
</dbReference>
<dbReference type="Pfam" id="PF06013">
    <property type="entry name" value="WXG100"/>
    <property type="match status" value="1"/>
</dbReference>
<dbReference type="SUPFAM" id="SSF140453">
    <property type="entry name" value="EsxAB dimer-like"/>
    <property type="match status" value="1"/>
</dbReference>
<organism>
    <name type="scientific">Mycobacterium tuberculosis (strain CDC 1551 / Oshkosh)</name>
    <dbReference type="NCBI Taxonomy" id="83331"/>
    <lineage>
        <taxon>Bacteria</taxon>
        <taxon>Bacillati</taxon>
        <taxon>Actinomycetota</taxon>
        <taxon>Actinomycetes</taxon>
        <taxon>Mycobacteriales</taxon>
        <taxon>Mycobacteriaceae</taxon>
        <taxon>Mycobacterium</taxon>
        <taxon>Mycobacterium tuberculosis complex</taxon>
    </lineage>
</organism>
<protein>
    <recommendedName>
        <fullName evidence="1">ESAT-6-like protein EsxJ</fullName>
    </recommendedName>
</protein>